<protein>
    <recommendedName>
        <fullName>Sodium/potassium-transporting ATPase subunit alpha-3</fullName>
        <shortName>Na(+)/K(+) ATPase alpha-3 subunit</shortName>
        <ecNumber>7.2.2.13</ecNumber>
    </recommendedName>
    <alternativeName>
        <fullName>Na(+)/K(+) ATPase alpha(III) subunit</fullName>
    </alternativeName>
    <alternativeName>
        <fullName>Sodium pump subunit alpha-3</fullName>
    </alternativeName>
</protein>
<gene>
    <name type="primary">ATP1A3</name>
</gene>
<proteinExistence type="evidence at transcript level"/>
<dbReference type="EC" id="7.2.2.13"/>
<dbReference type="EMBL" id="M59960">
    <property type="protein sequence ID" value="AAA48982.1"/>
    <property type="molecule type" value="mRNA"/>
</dbReference>
<dbReference type="PIR" id="B37227">
    <property type="entry name" value="B37227"/>
</dbReference>
<dbReference type="RefSeq" id="NP_990806.1">
    <property type="nucleotide sequence ID" value="NM_205475.1"/>
</dbReference>
<dbReference type="SMR" id="P24798"/>
<dbReference type="FunCoup" id="P24798">
    <property type="interactions" value="1282"/>
</dbReference>
<dbReference type="GeneID" id="396467"/>
<dbReference type="CTD" id="478"/>
<dbReference type="VEuPathDB" id="HostDB:geneid_396530"/>
<dbReference type="InParanoid" id="P24798"/>
<dbReference type="PhylomeDB" id="P24798"/>
<dbReference type="PRO" id="PR:P24798"/>
<dbReference type="Proteomes" id="UP000000539">
    <property type="component" value="Unassembled WGS sequence"/>
</dbReference>
<dbReference type="GO" id="GO:0005783">
    <property type="term" value="C:endoplasmic reticulum"/>
    <property type="evidence" value="ECO:0000250"/>
    <property type="project" value="UniProtKB"/>
</dbReference>
<dbReference type="GO" id="GO:0005794">
    <property type="term" value="C:Golgi apparatus"/>
    <property type="evidence" value="ECO:0000250"/>
    <property type="project" value="UniProtKB"/>
</dbReference>
<dbReference type="GO" id="GO:0005886">
    <property type="term" value="C:plasma membrane"/>
    <property type="evidence" value="ECO:0000250"/>
    <property type="project" value="UniProtKB"/>
</dbReference>
<dbReference type="GO" id="GO:0045202">
    <property type="term" value="C:synapse"/>
    <property type="evidence" value="ECO:0000250"/>
    <property type="project" value="UniProtKB"/>
</dbReference>
<dbReference type="GO" id="GO:0005524">
    <property type="term" value="F:ATP binding"/>
    <property type="evidence" value="ECO:0007669"/>
    <property type="project" value="UniProtKB-KW"/>
</dbReference>
<dbReference type="GO" id="GO:0016887">
    <property type="term" value="F:ATP hydrolysis activity"/>
    <property type="evidence" value="ECO:0007669"/>
    <property type="project" value="InterPro"/>
</dbReference>
<dbReference type="GO" id="GO:0046872">
    <property type="term" value="F:metal ion binding"/>
    <property type="evidence" value="ECO:0007669"/>
    <property type="project" value="UniProtKB-KW"/>
</dbReference>
<dbReference type="GO" id="GO:0005391">
    <property type="term" value="F:P-type sodium:potassium-exchanging transporter activity"/>
    <property type="evidence" value="ECO:0000250"/>
    <property type="project" value="UniProtKB"/>
</dbReference>
<dbReference type="GO" id="GO:0030007">
    <property type="term" value="P:intracellular potassium ion homeostasis"/>
    <property type="evidence" value="ECO:0000318"/>
    <property type="project" value="GO_Central"/>
</dbReference>
<dbReference type="GO" id="GO:0006883">
    <property type="term" value="P:intracellular sodium ion homeostasis"/>
    <property type="evidence" value="ECO:0000318"/>
    <property type="project" value="GO_Central"/>
</dbReference>
<dbReference type="GO" id="GO:1990573">
    <property type="term" value="P:potassium ion import across plasma membrane"/>
    <property type="evidence" value="ECO:0000318"/>
    <property type="project" value="GO_Central"/>
</dbReference>
<dbReference type="GO" id="GO:1902600">
    <property type="term" value="P:proton transmembrane transport"/>
    <property type="evidence" value="ECO:0000318"/>
    <property type="project" value="GO_Central"/>
</dbReference>
<dbReference type="GO" id="GO:0036376">
    <property type="term" value="P:sodium ion export across plasma membrane"/>
    <property type="evidence" value="ECO:0000318"/>
    <property type="project" value="GO_Central"/>
</dbReference>
<dbReference type="CDD" id="cd02608">
    <property type="entry name" value="P-type_ATPase_Na-K_like"/>
    <property type="match status" value="1"/>
</dbReference>
<dbReference type="FunFam" id="1.20.1110.10:FF:000163">
    <property type="match status" value="1"/>
</dbReference>
<dbReference type="FunFam" id="2.70.150.10:FF:000106">
    <property type="entry name" value="Sodium/potassium-transporting ATPase subunit alpha"/>
    <property type="match status" value="1"/>
</dbReference>
<dbReference type="FunFam" id="3.40.1110.10:FF:000001">
    <property type="entry name" value="Sodium/potassium-transporting ATPase subunit alpha"/>
    <property type="match status" value="1"/>
</dbReference>
<dbReference type="FunFam" id="3.40.50.1000:FF:000004">
    <property type="entry name" value="Sodium/potassium-transporting ATPase subunit alpha"/>
    <property type="match status" value="1"/>
</dbReference>
<dbReference type="FunFam" id="1.20.1110.10:FF:000095">
    <property type="entry name" value="Sodium/potassium-transporting ATPase subunit alpha-1"/>
    <property type="match status" value="2"/>
</dbReference>
<dbReference type="Gene3D" id="3.40.1110.10">
    <property type="entry name" value="Calcium-transporting ATPase, cytoplasmic domain N"/>
    <property type="match status" value="1"/>
</dbReference>
<dbReference type="Gene3D" id="2.70.150.10">
    <property type="entry name" value="Calcium-transporting ATPase, cytoplasmic transduction domain A"/>
    <property type="match status" value="1"/>
</dbReference>
<dbReference type="Gene3D" id="1.20.1110.10">
    <property type="entry name" value="Calcium-transporting ATPase, transmembrane domain"/>
    <property type="match status" value="1"/>
</dbReference>
<dbReference type="Gene3D" id="3.40.50.1000">
    <property type="entry name" value="HAD superfamily/HAD-like"/>
    <property type="match status" value="1"/>
</dbReference>
<dbReference type="InterPro" id="IPR006068">
    <property type="entry name" value="ATPase_P-typ_cation-transptr_C"/>
</dbReference>
<dbReference type="InterPro" id="IPR004014">
    <property type="entry name" value="ATPase_P-typ_cation-transptr_N"/>
</dbReference>
<dbReference type="InterPro" id="IPR023299">
    <property type="entry name" value="ATPase_P-typ_cyto_dom_N"/>
</dbReference>
<dbReference type="InterPro" id="IPR018303">
    <property type="entry name" value="ATPase_P-typ_P_site"/>
</dbReference>
<dbReference type="InterPro" id="IPR023298">
    <property type="entry name" value="ATPase_P-typ_TM_dom_sf"/>
</dbReference>
<dbReference type="InterPro" id="IPR008250">
    <property type="entry name" value="ATPase_P-typ_transduc_dom_A_sf"/>
</dbReference>
<dbReference type="InterPro" id="IPR050510">
    <property type="entry name" value="Cation_transp_ATPase_P-type"/>
</dbReference>
<dbReference type="InterPro" id="IPR036412">
    <property type="entry name" value="HAD-like_sf"/>
</dbReference>
<dbReference type="InterPro" id="IPR023214">
    <property type="entry name" value="HAD_sf"/>
</dbReference>
<dbReference type="InterPro" id="IPR005775">
    <property type="entry name" value="P-type_ATPase_IIC"/>
</dbReference>
<dbReference type="InterPro" id="IPR001757">
    <property type="entry name" value="P_typ_ATPase"/>
</dbReference>
<dbReference type="InterPro" id="IPR044492">
    <property type="entry name" value="P_typ_ATPase_HD_dom"/>
</dbReference>
<dbReference type="NCBIfam" id="TIGR01106">
    <property type="entry name" value="ATPase-IIC_X-K"/>
    <property type="match status" value="1"/>
</dbReference>
<dbReference type="NCBIfam" id="TIGR01494">
    <property type="entry name" value="ATPase_P-type"/>
    <property type="match status" value="2"/>
</dbReference>
<dbReference type="PANTHER" id="PTHR43294">
    <property type="entry name" value="SODIUM/POTASSIUM-TRANSPORTING ATPASE SUBUNIT ALPHA"/>
    <property type="match status" value="1"/>
</dbReference>
<dbReference type="PANTHER" id="PTHR43294:SF15">
    <property type="entry name" value="SODIUM_POTASSIUM-TRANSPORTING ATPASE SUBUNIT ALPHA-3"/>
    <property type="match status" value="1"/>
</dbReference>
<dbReference type="Pfam" id="PF13246">
    <property type="entry name" value="Cation_ATPase"/>
    <property type="match status" value="1"/>
</dbReference>
<dbReference type="Pfam" id="PF00689">
    <property type="entry name" value="Cation_ATPase_C"/>
    <property type="match status" value="1"/>
</dbReference>
<dbReference type="Pfam" id="PF00690">
    <property type="entry name" value="Cation_ATPase_N"/>
    <property type="match status" value="1"/>
</dbReference>
<dbReference type="Pfam" id="PF00122">
    <property type="entry name" value="E1-E2_ATPase"/>
    <property type="match status" value="1"/>
</dbReference>
<dbReference type="PRINTS" id="PR00119">
    <property type="entry name" value="CATATPASE"/>
</dbReference>
<dbReference type="PRINTS" id="PR00121">
    <property type="entry name" value="NAKATPASE"/>
</dbReference>
<dbReference type="SFLD" id="SFLDG00002">
    <property type="entry name" value="C1.7:_P-type_atpase_like"/>
    <property type="match status" value="1"/>
</dbReference>
<dbReference type="SFLD" id="SFLDF00027">
    <property type="entry name" value="p-type_atpase"/>
    <property type="match status" value="1"/>
</dbReference>
<dbReference type="SMART" id="SM00831">
    <property type="entry name" value="Cation_ATPase_N"/>
    <property type="match status" value="1"/>
</dbReference>
<dbReference type="SUPFAM" id="SSF81653">
    <property type="entry name" value="Calcium ATPase, transduction domain A"/>
    <property type="match status" value="1"/>
</dbReference>
<dbReference type="SUPFAM" id="SSF81665">
    <property type="entry name" value="Calcium ATPase, transmembrane domain M"/>
    <property type="match status" value="1"/>
</dbReference>
<dbReference type="SUPFAM" id="SSF56784">
    <property type="entry name" value="HAD-like"/>
    <property type="match status" value="1"/>
</dbReference>
<dbReference type="SUPFAM" id="SSF81660">
    <property type="entry name" value="Metal cation-transporting ATPase, ATP-binding domain N"/>
    <property type="match status" value="1"/>
</dbReference>
<dbReference type="PROSITE" id="PS00154">
    <property type="entry name" value="ATPASE_E1_E2"/>
    <property type="match status" value="1"/>
</dbReference>
<sequence>MGDKGEKESPKKGKGKRDLDDLKKEVAMTEHKMSIEEVCRKYNTDCVQGLTHSKAQEILARDGPNALTPPPTTPEWVKFCRQLFGGFSILLWIGAILCFLAYGIQAGTEDEPSNDNLYLGIVLAAVVIITGCFSYYQEAKSSKIMESFKNMVPQQALVIREGEKMQLNAEEVVVGDLVEVKGGDRVPADLRIISAHGCKVDNSSLTGESEPQTRSPDCTHDNPLETRNITFFSTNCVEGTARGVVIATGDRTVMGRIATLASGLEVGKTPIAVEIEHFIQLITGVAVFLGISFFVLSLILGYTWLEAVIFLIGIIVANVPEGLLATVTVCLTLTAKRMARKNCLVKNLEAVETLGSTSTICSDKTGTLTQNRMTVAHMWFDNQIHEADTTEDQSGTSFDKSSATWVALSHIAGLCNRAVFKGGQENVPILKRDVAGDASESALLKCIELSSGSVKVMRERNKKVAEIPFNSTNKYQLSIHETEDPNDNRYLLVMKGAPERILDRCSTILLQGKEQPLDEEMKEAFQNAYLELGGLGERVLGFCHFYLPEEQYPKGFAFDCDDVNFATDNLCFVGLMSMIDPPRAAVPDAVGKCRSAGIKVIMVTGDHPITAKAIAKGVGIISEGNETVEDIAARLNIPVSQVNPRDAKACVIHGTDLKDMSSEQIDEILQNHTEIVFARTSPQQKLIIVEGCQRQGAIVAVTGDGVNDSPALKKADIGVAMGIRGSDVSKQAADMILLDDNFASIVTGVEEGRLIFDNLKKSIAYTLTSNIPEITPFLLFIMANIPLPLGTITILCIDLGTDMVPAISLAYEAAESDIMKRQPRNPRSDKLVNERLISMAYGQIGMIQALGGFFSYFVILAENGFLPSCLVGIRLSWDDRTINDLEDSYGQQWTYEQRKVVEFTCHTAFFVSIVVVQWADLIICKTRRNSVFQQGMKNKILIFGLFEETALAAFLSYCPGMDVALRMYPLKPSWWFCAFPYSFLIFVYDEIRKLILRRNPGGWVEKETYY</sequence>
<feature type="chain" id="PRO_0000046301" description="Sodium/potassium-transporting ATPase subunit alpha-3">
    <location>
        <begin position="1"/>
        <end position="1010"/>
    </location>
</feature>
<feature type="topological domain" description="Cytoplasmic" evidence="2">
    <location>
        <begin position="1"/>
        <end position="74"/>
    </location>
</feature>
<feature type="transmembrane region" description="Helical" evidence="2">
    <location>
        <begin position="75"/>
        <end position="95"/>
    </location>
</feature>
<feature type="topological domain" description="Extracellular" evidence="2">
    <location>
        <begin position="96"/>
        <end position="118"/>
    </location>
</feature>
<feature type="transmembrane region" description="Helical" evidence="2">
    <location>
        <begin position="119"/>
        <end position="139"/>
    </location>
</feature>
<feature type="topological domain" description="Cytoplasmic" evidence="2">
    <location>
        <begin position="140"/>
        <end position="275"/>
    </location>
</feature>
<feature type="transmembrane region" description="Helical" evidence="2">
    <location>
        <begin position="276"/>
        <end position="295"/>
    </location>
</feature>
<feature type="topological domain" description="Extracellular" evidence="2">
    <location>
        <begin position="296"/>
        <end position="307"/>
    </location>
</feature>
<feature type="transmembrane region" description="Helical" evidence="2">
    <location>
        <begin position="308"/>
        <end position="325"/>
    </location>
</feature>
<feature type="topological domain" description="Cytoplasmic" evidence="2">
    <location>
        <begin position="326"/>
        <end position="759"/>
    </location>
</feature>
<feature type="transmembrane region" description="Helical" evidence="2">
    <location>
        <begin position="760"/>
        <end position="779"/>
    </location>
</feature>
<feature type="topological domain" description="Extracellular" evidence="2">
    <location>
        <begin position="780"/>
        <end position="789"/>
    </location>
</feature>
<feature type="transmembrane region" description="Helical" evidence="2">
    <location>
        <begin position="790"/>
        <end position="810"/>
    </location>
</feature>
<feature type="topological domain" description="Cytoplasmic" evidence="2">
    <location>
        <begin position="811"/>
        <end position="830"/>
    </location>
</feature>
<feature type="transmembrane region" description="Helical" evidence="2">
    <location>
        <begin position="831"/>
        <end position="853"/>
    </location>
</feature>
<feature type="topological domain" description="Extracellular" evidence="2">
    <location>
        <begin position="854"/>
        <end position="905"/>
    </location>
</feature>
<feature type="transmembrane region" description="Helical" evidence="2">
    <location>
        <begin position="906"/>
        <end position="925"/>
    </location>
</feature>
<feature type="topological domain" description="Cytoplasmic" evidence="2">
    <location>
        <begin position="926"/>
        <end position="938"/>
    </location>
</feature>
<feature type="transmembrane region" description="Helical" evidence="2">
    <location>
        <begin position="939"/>
        <end position="957"/>
    </location>
</feature>
<feature type="topological domain" description="Extracellular" evidence="2">
    <location>
        <begin position="958"/>
        <end position="972"/>
    </location>
</feature>
<feature type="transmembrane region" description="Helical" evidence="2">
    <location>
        <begin position="973"/>
        <end position="993"/>
    </location>
</feature>
<feature type="topological domain" description="Cytoplasmic" evidence="2">
    <location>
        <begin position="994"/>
        <end position="1010"/>
    </location>
</feature>
<feature type="region of interest" description="Disordered" evidence="3">
    <location>
        <begin position="1"/>
        <end position="21"/>
    </location>
</feature>
<feature type="region of interest" description="Interaction with phosphoinositide-3 kinase" evidence="1">
    <location>
        <begin position="69"/>
        <end position="71"/>
    </location>
</feature>
<feature type="active site" description="4-aspartylphosphate intermediate" evidence="1">
    <location>
        <position position="363"/>
    </location>
</feature>
<feature type="binding site" evidence="1">
    <location>
        <position position="704"/>
    </location>
    <ligand>
        <name>Mg(2+)</name>
        <dbReference type="ChEBI" id="CHEBI:18420"/>
    </ligand>
</feature>
<feature type="binding site" evidence="1">
    <location>
        <position position="708"/>
    </location>
    <ligand>
        <name>Mg(2+)</name>
        <dbReference type="ChEBI" id="CHEBI:18420"/>
    </ligand>
</feature>
<feature type="modified residue" description="Phosphoserine; by PKA" evidence="1">
    <location>
        <position position="930"/>
    </location>
</feature>
<comment type="function">
    <text>This is the catalytic component of the active enzyme, which catalyzes the hydrolysis of ATP coupled with the exchange of sodium and potassium ions across the plasma membrane. This action creates the electrochemical gradient of sodium and potassium ions, providing the energy for active transport of various nutrients.</text>
</comment>
<comment type="catalytic activity">
    <reaction>
        <text>K(+)(out) + Na(+)(in) + ATP + H2O = K(+)(in) + Na(+)(out) + ADP + phosphate + H(+)</text>
        <dbReference type="Rhea" id="RHEA:18353"/>
        <dbReference type="ChEBI" id="CHEBI:15377"/>
        <dbReference type="ChEBI" id="CHEBI:15378"/>
        <dbReference type="ChEBI" id="CHEBI:29101"/>
        <dbReference type="ChEBI" id="CHEBI:29103"/>
        <dbReference type="ChEBI" id="CHEBI:30616"/>
        <dbReference type="ChEBI" id="CHEBI:43474"/>
        <dbReference type="ChEBI" id="CHEBI:456216"/>
        <dbReference type="EC" id="7.2.2.13"/>
    </reaction>
</comment>
<comment type="subunit">
    <text evidence="4">The sodium/potassium-transporting ATPase is composed of a catalytic alpha subunit, an auxiliary non-catalytic beta subunit and an additional regulatory subunit.</text>
</comment>
<comment type="subcellular location">
    <subcellularLocation>
        <location evidence="1">Cell membrane</location>
        <topology evidence="1">Multi-pass membrane protein</topology>
    </subcellularLocation>
</comment>
<comment type="similarity">
    <text evidence="4">Belongs to the cation transport ATPase (P-type) (TC 3.A.3) family. Type IIC subfamily.</text>
</comment>
<accession>P24798</accession>
<reference key="1">
    <citation type="journal article" date="1990" name="Am. J. Physiol.">
        <title>Stability of Na(+)-K(+)-ATPase alpha-subunit isoforms in evolution.</title>
        <authorList>
            <person name="Takeyasu K."/>
            <person name="Lemas V."/>
            <person name="Fambrough D.M."/>
        </authorList>
    </citation>
    <scope>NUCLEOTIDE SEQUENCE [MRNA]</scope>
</reference>
<name>AT1A3_CHICK</name>
<keyword id="KW-0067">ATP-binding</keyword>
<keyword id="KW-1003">Cell membrane</keyword>
<keyword id="KW-0406">Ion transport</keyword>
<keyword id="KW-0460">Magnesium</keyword>
<keyword id="KW-0472">Membrane</keyword>
<keyword id="KW-0479">Metal-binding</keyword>
<keyword id="KW-0547">Nucleotide-binding</keyword>
<keyword id="KW-0597">Phosphoprotein</keyword>
<keyword id="KW-0630">Potassium</keyword>
<keyword id="KW-0633">Potassium transport</keyword>
<keyword id="KW-1185">Reference proteome</keyword>
<keyword id="KW-0915">Sodium</keyword>
<keyword id="KW-0739">Sodium transport</keyword>
<keyword id="KW-0740">Sodium/potassium transport</keyword>
<keyword id="KW-1278">Translocase</keyword>
<keyword id="KW-0812">Transmembrane</keyword>
<keyword id="KW-1133">Transmembrane helix</keyword>
<keyword id="KW-0813">Transport</keyword>
<organism>
    <name type="scientific">Gallus gallus</name>
    <name type="common">Chicken</name>
    <dbReference type="NCBI Taxonomy" id="9031"/>
    <lineage>
        <taxon>Eukaryota</taxon>
        <taxon>Metazoa</taxon>
        <taxon>Chordata</taxon>
        <taxon>Craniata</taxon>
        <taxon>Vertebrata</taxon>
        <taxon>Euteleostomi</taxon>
        <taxon>Archelosauria</taxon>
        <taxon>Archosauria</taxon>
        <taxon>Dinosauria</taxon>
        <taxon>Saurischia</taxon>
        <taxon>Theropoda</taxon>
        <taxon>Coelurosauria</taxon>
        <taxon>Aves</taxon>
        <taxon>Neognathae</taxon>
        <taxon>Galloanserae</taxon>
        <taxon>Galliformes</taxon>
        <taxon>Phasianidae</taxon>
        <taxon>Phasianinae</taxon>
        <taxon>Gallus</taxon>
    </lineage>
</organism>
<evidence type="ECO:0000250" key="1"/>
<evidence type="ECO:0000255" key="2"/>
<evidence type="ECO:0000256" key="3">
    <source>
        <dbReference type="SAM" id="MobiDB-lite"/>
    </source>
</evidence>
<evidence type="ECO:0000305" key="4"/>